<keyword id="KW-0150">Chloroplast</keyword>
<keyword id="KW-0249">Electron transport</keyword>
<keyword id="KW-0349">Heme</keyword>
<keyword id="KW-0408">Iron</keyword>
<keyword id="KW-0472">Membrane</keyword>
<keyword id="KW-0479">Metal-binding</keyword>
<keyword id="KW-0602">Photosynthesis</keyword>
<keyword id="KW-0934">Plastid</keyword>
<keyword id="KW-0793">Thylakoid</keyword>
<keyword id="KW-0812">Transmembrane</keyword>
<keyword id="KW-1133">Transmembrane helix</keyword>
<keyword id="KW-0813">Transport</keyword>
<name>CYB6_GRATL</name>
<protein>
    <recommendedName>
        <fullName evidence="1">Cytochrome b6</fullName>
    </recommendedName>
</protein>
<proteinExistence type="inferred from homology"/>
<accession>Q6B903</accession>
<sequence>MGKVYDWFEERLEIQAIADDITSKYVPPHVNIFYCIGGIVFTSFLIQVASGFAMTFYYRPTVAEAFSSVEYIMTDVNFGWLIRSIHRWSASMMVLMLILHMFRVYLTGGFKKPRELTWVTGVILAVLTVSFGVTGYSLPWDQIGYWAVKIVTGVPEAIPVVGGSIVELLRGGVSVGQSTLTRFYSLHTFVLPLLTAVFMLMHFLMIRKQGISGPL</sequence>
<feature type="chain" id="PRO_0000061794" description="Cytochrome b6">
    <location>
        <begin position="1"/>
        <end position="215"/>
    </location>
</feature>
<feature type="transmembrane region" description="Helical" evidence="1">
    <location>
        <begin position="32"/>
        <end position="52"/>
    </location>
</feature>
<feature type="transmembrane region" description="Helical" evidence="1">
    <location>
        <begin position="90"/>
        <end position="110"/>
    </location>
</feature>
<feature type="transmembrane region" description="Helical" evidence="1">
    <location>
        <begin position="116"/>
        <end position="136"/>
    </location>
</feature>
<feature type="transmembrane region" description="Helical" evidence="1">
    <location>
        <begin position="186"/>
        <end position="206"/>
    </location>
</feature>
<feature type="binding site" description="covalent" evidence="1">
    <location>
        <position position="35"/>
    </location>
    <ligand>
        <name>heme c</name>
        <dbReference type="ChEBI" id="CHEBI:61717"/>
    </ligand>
</feature>
<feature type="binding site" description="axial binding residue" evidence="1">
    <location>
        <position position="86"/>
    </location>
    <ligand>
        <name>heme b</name>
        <dbReference type="ChEBI" id="CHEBI:60344"/>
        <label>2</label>
    </ligand>
    <ligandPart>
        <name>Fe</name>
        <dbReference type="ChEBI" id="CHEBI:18248"/>
    </ligandPart>
</feature>
<feature type="binding site" description="axial binding residue" evidence="1">
    <location>
        <position position="100"/>
    </location>
    <ligand>
        <name>heme b</name>
        <dbReference type="ChEBI" id="CHEBI:60344"/>
        <label>1</label>
    </ligand>
    <ligandPart>
        <name>Fe</name>
        <dbReference type="ChEBI" id="CHEBI:18248"/>
    </ligandPart>
</feature>
<feature type="binding site" description="axial binding residue" evidence="1">
    <location>
        <position position="187"/>
    </location>
    <ligand>
        <name>heme b</name>
        <dbReference type="ChEBI" id="CHEBI:60344"/>
        <label>2</label>
    </ligand>
    <ligandPart>
        <name>Fe</name>
        <dbReference type="ChEBI" id="CHEBI:18248"/>
    </ligandPart>
</feature>
<feature type="binding site" description="axial binding residue" evidence="1">
    <location>
        <position position="202"/>
    </location>
    <ligand>
        <name>heme b</name>
        <dbReference type="ChEBI" id="CHEBI:60344"/>
        <label>1</label>
    </ligand>
    <ligandPart>
        <name>Fe</name>
        <dbReference type="ChEBI" id="CHEBI:18248"/>
    </ligandPart>
</feature>
<gene>
    <name evidence="1" type="primary">petB</name>
    <name type="ordered locus">Grc000051</name>
</gene>
<evidence type="ECO:0000255" key="1">
    <source>
        <dbReference type="HAMAP-Rule" id="MF_00633"/>
    </source>
</evidence>
<comment type="function">
    <text evidence="1">Component of the cytochrome b6-f complex, which mediates electron transfer between photosystem II (PSII) and photosystem I (PSI), cyclic electron flow around PSI, and state transitions.</text>
</comment>
<comment type="cofactor">
    <cofactor evidence="1">
        <name>heme b</name>
        <dbReference type="ChEBI" id="CHEBI:60344"/>
    </cofactor>
    <text evidence="1">Binds 2 heme b groups non-covalently with two histidine residues as axial ligands.</text>
</comment>
<comment type="cofactor">
    <cofactor evidence="1">
        <name>heme c</name>
        <dbReference type="ChEBI" id="CHEBI:61717"/>
    </cofactor>
    <text evidence="1">Binds one heme group covalently by a single cysteine link with no axial amino acid ligand. This heme was named heme ci.</text>
</comment>
<comment type="subunit">
    <text evidence="1">The 4 large subunits of the cytochrome b6-f complex are cytochrome b6, subunit IV (17 kDa polypeptide, PetD), cytochrome f and the Rieske protein, while the 4 small subunits are PetG, PetL, PetM and PetN. The complex functions as a dimer.</text>
</comment>
<comment type="subcellular location">
    <subcellularLocation>
        <location evidence="1">Plastid</location>
        <location evidence="1">Chloroplast thylakoid membrane</location>
        <topology evidence="1">Multi-pass membrane protein</topology>
    </subcellularLocation>
</comment>
<comment type="miscellaneous">
    <text evidence="1">Heme 1 (or BH or b566) is high-potential and absorbs at about 566 nm, and heme 2 (or BL or b562) is low-potential and absorbs at about 562 nm.</text>
</comment>
<comment type="similarity">
    <text evidence="1">Belongs to the cytochrome b family. PetB subfamily.</text>
</comment>
<geneLocation type="chloroplast"/>
<reference key="1">
    <citation type="journal article" date="2004" name="J. Mol. Evol.">
        <title>Comparative analysis of the complete plastid genome sequence of the red alga Gracilaria tenuistipitata var. liui provides insights into the evolution of rhodoplasts and their relationship to other plastids.</title>
        <authorList>
            <person name="Hagopian J.C."/>
            <person name="Reis M."/>
            <person name="Kitajima J.P."/>
            <person name="Bhattacharya D."/>
            <person name="de Oliveira M.C."/>
        </authorList>
    </citation>
    <scope>NUCLEOTIDE SEQUENCE [LARGE SCALE GENOMIC DNA]</scope>
</reference>
<organism>
    <name type="scientific">Gracilaria tenuistipitata var. liui</name>
    <name type="common">Red alga</name>
    <dbReference type="NCBI Taxonomy" id="285951"/>
    <lineage>
        <taxon>Eukaryota</taxon>
        <taxon>Rhodophyta</taxon>
        <taxon>Florideophyceae</taxon>
        <taxon>Rhodymeniophycidae</taxon>
        <taxon>Gracilariales</taxon>
        <taxon>Gracilariaceae</taxon>
        <taxon>Gracilaria</taxon>
        <taxon>Gracilaria tenuistipitata</taxon>
    </lineage>
</organism>
<dbReference type="EMBL" id="AY673996">
    <property type="protein sequence ID" value="AAT79632.1"/>
    <property type="molecule type" value="Genomic_DNA"/>
</dbReference>
<dbReference type="RefSeq" id="YP_063557.1">
    <property type="nucleotide sequence ID" value="NC_006137.1"/>
</dbReference>
<dbReference type="SMR" id="Q6B903"/>
<dbReference type="GeneID" id="2944153"/>
<dbReference type="GO" id="GO:0009535">
    <property type="term" value="C:chloroplast thylakoid membrane"/>
    <property type="evidence" value="ECO:0007669"/>
    <property type="project" value="UniProtKB-SubCell"/>
</dbReference>
<dbReference type="GO" id="GO:0045158">
    <property type="term" value="F:electron transporter, transferring electrons within cytochrome b6/f complex of photosystem II activity"/>
    <property type="evidence" value="ECO:0007669"/>
    <property type="project" value="UniProtKB-UniRule"/>
</dbReference>
<dbReference type="GO" id="GO:0046872">
    <property type="term" value="F:metal ion binding"/>
    <property type="evidence" value="ECO:0007669"/>
    <property type="project" value="UniProtKB-KW"/>
</dbReference>
<dbReference type="GO" id="GO:0016491">
    <property type="term" value="F:oxidoreductase activity"/>
    <property type="evidence" value="ECO:0007669"/>
    <property type="project" value="InterPro"/>
</dbReference>
<dbReference type="GO" id="GO:0015979">
    <property type="term" value="P:photosynthesis"/>
    <property type="evidence" value="ECO:0007669"/>
    <property type="project" value="UniProtKB-UniRule"/>
</dbReference>
<dbReference type="GO" id="GO:0022904">
    <property type="term" value="P:respiratory electron transport chain"/>
    <property type="evidence" value="ECO:0007669"/>
    <property type="project" value="InterPro"/>
</dbReference>
<dbReference type="CDD" id="cd00284">
    <property type="entry name" value="Cytochrome_b_N"/>
    <property type="match status" value="1"/>
</dbReference>
<dbReference type="FunFam" id="1.20.810.10:FF:000001">
    <property type="entry name" value="Cytochrome b6"/>
    <property type="match status" value="1"/>
</dbReference>
<dbReference type="Gene3D" id="1.20.810.10">
    <property type="entry name" value="Cytochrome Bc1 Complex, Chain C"/>
    <property type="match status" value="1"/>
</dbReference>
<dbReference type="HAMAP" id="MF_00633">
    <property type="entry name" value="Cytb6_f_cytb6"/>
    <property type="match status" value="1"/>
</dbReference>
<dbReference type="InterPro" id="IPR005797">
    <property type="entry name" value="Cyt_b/b6_N"/>
</dbReference>
<dbReference type="InterPro" id="IPR023530">
    <property type="entry name" value="Cyt_B6_PetB"/>
</dbReference>
<dbReference type="InterPro" id="IPR027387">
    <property type="entry name" value="Cytb/b6-like_sf"/>
</dbReference>
<dbReference type="InterPro" id="IPR048259">
    <property type="entry name" value="Cytochrome_b_N_euk/bac"/>
</dbReference>
<dbReference type="InterPro" id="IPR016174">
    <property type="entry name" value="Di-haem_cyt_TM"/>
</dbReference>
<dbReference type="NCBIfam" id="NF002990">
    <property type="entry name" value="PRK03735.1"/>
    <property type="match status" value="1"/>
</dbReference>
<dbReference type="PANTHER" id="PTHR19271">
    <property type="entry name" value="CYTOCHROME B"/>
    <property type="match status" value="1"/>
</dbReference>
<dbReference type="PANTHER" id="PTHR19271:SF16">
    <property type="entry name" value="CYTOCHROME B"/>
    <property type="match status" value="1"/>
</dbReference>
<dbReference type="Pfam" id="PF00033">
    <property type="entry name" value="Cytochrome_B"/>
    <property type="match status" value="1"/>
</dbReference>
<dbReference type="PIRSF" id="PIRSF000032">
    <property type="entry name" value="Cytochrome_b6"/>
    <property type="match status" value="1"/>
</dbReference>
<dbReference type="SUPFAM" id="SSF81342">
    <property type="entry name" value="Transmembrane di-heme cytochromes"/>
    <property type="match status" value="1"/>
</dbReference>
<dbReference type="PROSITE" id="PS51002">
    <property type="entry name" value="CYTB_NTER"/>
    <property type="match status" value="1"/>
</dbReference>